<proteinExistence type="evidence at protein level"/>
<protein>
    <recommendedName>
        <fullName>Kinesin-like protein KIF18B</fullName>
    </recommendedName>
</protein>
<accession>Q86Y91</accession>
<accession>A0A0C4DGP2</accession>
<accession>A0A0C4DGP5</accession>
<accession>A6NJI2</accession>
<accession>B7ZM49</accession>
<accession>B9EGM8</accession>
<accession>D5L6I1</accession>
<organism>
    <name type="scientific">Homo sapiens</name>
    <name type="common">Human</name>
    <dbReference type="NCBI Taxonomy" id="9606"/>
    <lineage>
        <taxon>Eukaryota</taxon>
        <taxon>Metazoa</taxon>
        <taxon>Chordata</taxon>
        <taxon>Craniata</taxon>
        <taxon>Vertebrata</taxon>
        <taxon>Euteleostomi</taxon>
        <taxon>Mammalia</taxon>
        <taxon>Eutheria</taxon>
        <taxon>Euarchontoglires</taxon>
        <taxon>Primates</taxon>
        <taxon>Haplorrhini</taxon>
        <taxon>Catarrhini</taxon>
        <taxon>Hominidae</taxon>
        <taxon>Homo</taxon>
    </lineage>
</organism>
<dbReference type="EMBL" id="GU808359">
    <property type="protein sequence ID" value="ADE43428.1"/>
    <property type="status" value="ALT_SEQ"/>
    <property type="molecule type" value="mRNA"/>
</dbReference>
<dbReference type="EMBL" id="AC015936">
    <property type="status" value="NOT_ANNOTATED_CDS"/>
    <property type="molecule type" value="Genomic_DNA"/>
</dbReference>
<dbReference type="EMBL" id="BC044933">
    <property type="protein sequence ID" value="AAH44933.1"/>
    <property type="molecule type" value="mRNA"/>
</dbReference>
<dbReference type="EMBL" id="BC136590">
    <property type="protein sequence ID" value="AAI36591.1"/>
    <property type="molecule type" value="mRNA"/>
</dbReference>
<dbReference type="EMBL" id="BC144271">
    <property type="protein sequence ID" value="AAI44272.1"/>
    <property type="molecule type" value="mRNA"/>
</dbReference>
<dbReference type="CCDS" id="CCDS45709.2">
    <molecule id="Q86Y91-5"/>
</dbReference>
<dbReference type="CCDS" id="CCDS58555.1">
    <molecule id="Q86Y91-6"/>
</dbReference>
<dbReference type="RefSeq" id="NP_001251503.1">
    <molecule id="Q86Y91-6"/>
    <property type="nucleotide sequence ID" value="NM_001264573.2"/>
</dbReference>
<dbReference type="RefSeq" id="NP_001252506.1">
    <molecule id="Q86Y91-5"/>
    <property type="nucleotide sequence ID" value="NM_001265577.2"/>
</dbReference>
<dbReference type="SMR" id="Q86Y91"/>
<dbReference type="BioGRID" id="127024">
    <property type="interactions" value="68"/>
</dbReference>
<dbReference type="FunCoup" id="Q86Y91">
    <property type="interactions" value="672"/>
</dbReference>
<dbReference type="IntAct" id="Q86Y91">
    <property type="interactions" value="37"/>
</dbReference>
<dbReference type="MINT" id="Q86Y91"/>
<dbReference type="STRING" id="9606.ENSP00000465992"/>
<dbReference type="GlyGen" id="Q86Y91">
    <property type="glycosylation" value="2 sites, 1 O-linked glycan (1 site)"/>
</dbReference>
<dbReference type="iPTMnet" id="Q86Y91"/>
<dbReference type="PhosphoSitePlus" id="Q86Y91"/>
<dbReference type="BioMuta" id="KIF18B"/>
<dbReference type="DMDM" id="325511395"/>
<dbReference type="jPOST" id="Q86Y91"/>
<dbReference type="MassIVE" id="Q86Y91"/>
<dbReference type="PaxDb" id="9606-ENSP00000465992"/>
<dbReference type="PeptideAtlas" id="Q86Y91"/>
<dbReference type="Pumba" id="Q86Y91"/>
<dbReference type="Antibodypedia" id="8290">
    <property type="antibodies" value="20 antibodies from 9 providers"/>
</dbReference>
<dbReference type="DNASU" id="146909"/>
<dbReference type="Ensembl" id="ENST00000587309.5">
    <molecule id="Q86Y91-6"/>
    <property type="protein sequence ID" value="ENSP00000465377.1"/>
    <property type="gene ID" value="ENSG00000186185.14"/>
</dbReference>
<dbReference type="Ensembl" id="ENST00000593135.6">
    <molecule id="Q86Y91-5"/>
    <property type="protein sequence ID" value="ENSP00000465992.1"/>
    <property type="gene ID" value="ENSG00000186185.14"/>
</dbReference>
<dbReference type="GeneID" id="146909"/>
<dbReference type="KEGG" id="hsa:146909"/>
<dbReference type="MANE-Select" id="ENST00000593135.6">
    <property type="protein sequence ID" value="ENSP00000465992.1"/>
    <property type="RefSeq nucleotide sequence ID" value="NM_001265577.2"/>
    <property type="RefSeq protein sequence ID" value="NP_001252506.1"/>
</dbReference>
<dbReference type="UCSC" id="uc010wjh.4">
    <molecule id="Q86Y91-5"/>
    <property type="organism name" value="human"/>
</dbReference>
<dbReference type="AGR" id="HGNC:27102"/>
<dbReference type="CTD" id="146909"/>
<dbReference type="DisGeNET" id="146909"/>
<dbReference type="GeneCards" id="KIF18B"/>
<dbReference type="HGNC" id="HGNC:27102">
    <property type="gene designation" value="KIF18B"/>
</dbReference>
<dbReference type="HPA" id="ENSG00000186185">
    <property type="expression patterns" value="Tissue enhanced (bone marrow, lymphoid tissue)"/>
</dbReference>
<dbReference type="MIM" id="614570">
    <property type="type" value="gene"/>
</dbReference>
<dbReference type="neXtProt" id="NX_Q86Y91"/>
<dbReference type="OpenTargets" id="ENSG00000186185"/>
<dbReference type="VEuPathDB" id="HostDB:ENSG00000186185"/>
<dbReference type="eggNOG" id="KOG0242">
    <property type="taxonomic scope" value="Eukaryota"/>
</dbReference>
<dbReference type="GeneTree" id="ENSGT00940000161200"/>
<dbReference type="HOGENOM" id="CLU_001485_21_5_1"/>
<dbReference type="InParanoid" id="Q86Y91"/>
<dbReference type="OMA" id="HQEEKRF"/>
<dbReference type="OrthoDB" id="3176171at2759"/>
<dbReference type="PAN-GO" id="Q86Y91">
    <property type="GO annotations" value="10 GO annotations based on evolutionary models"/>
</dbReference>
<dbReference type="PhylomeDB" id="Q86Y91"/>
<dbReference type="PathwayCommons" id="Q86Y91"/>
<dbReference type="Reactome" id="R-HSA-6811434">
    <property type="pathway name" value="COPI-dependent Golgi-to-ER retrograde traffic"/>
</dbReference>
<dbReference type="Reactome" id="R-HSA-983189">
    <property type="pathway name" value="Kinesins"/>
</dbReference>
<dbReference type="SignaLink" id="Q86Y91"/>
<dbReference type="SIGNOR" id="Q86Y91"/>
<dbReference type="BioGRID-ORCS" id="146909">
    <property type="hits" value="188 hits in 1169 CRISPR screens"/>
</dbReference>
<dbReference type="ChiTaRS" id="KIF18B">
    <property type="organism name" value="human"/>
</dbReference>
<dbReference type="GenomeRNAi" id="146909"/>
<dbReference type="Pharos" id="Q86Y91">
    <property type="development level" value="Tbio"/>
</dbReference>
<dbReference type="PRO" id="PR:Q86Y91"/>
<dbReference type="Proteomes" id="UP000005640">
    <property type="component" value="Chromosome 17"/>
</dbReference>
<dbReference type="RNAct" id="Q86Y91">
    <property type="molecule type" value="protein"/>
</dbReference>
<dbReference type="Bgee" id="ENSG00000186185">
    <property type="expression patterns" value="Expressed in trabecular bone tissue and 130 other cell types or tissues"/>
</dbReference>
<dbReference type="ExpressionAtlas" id="Q86Y91">
    <property type="expression patterns" value="baseline and differential"/>
</dbReference>
<dbReference type="GO" id="GO:0000235">
    <property type="term" value="C:astral microtubule"/>
    <property type="evidence" value="ECO:0000314"/>
    <property type="project" value="UniProtKB"/>
</dbReference>
<dbReference type="GO" id="GO:0005737">
    <property type="term" value="C:cytoplasm"/>
    <property type="evidence" value="ECO:0000314"/>
    <property type="project" value="UniProtKB"/>
</dbReference>
<dbReference type="GO" id="GO:0005829">
    <property type="term" value="C:cytosol"/>
    <property type="evidence" value="ECO:0000314"/>
    <property type="project" value="HPA"/>
</dbReference>
<dbReference type="GO" id="GO:0005871">
    <property type="term" value="C:kinesin complex"/>
    <property type="evidence" value="ECO:0000318"/>
    <property type="project" value="GO_Central"/>
</dbReference>
<dbReference type="GO" id="GO:1990752">
    <property type="term" value="C:microtubule end"/>
    <property type="evidence" value="ECO:0000314"/>
    <property type="project" value="HPA"/>
</dbReference>
<dbReference type="GO" id="GO:0035371">
    <property type="term" value="C:microtubule plus-end"/>
    <property type="evidence" value="ECO:0000314"/>
    <property type="project" value="UniProtKB"/>
</dbReference>
<dbReference type="GO" id="GO:0061673">
    <property type="term" value="C:mitotic spindle astral microtubule"/>
    <property type="evidence" value="ECO:0000318"/>
    <property type="project" value="GO_Central"/>
</dbReference>
<dbReference type="GO" id="GO:1990023">
    <property type="term" value="C:mitotic spindle midzone"/>
    <property type="evidence" value="ECO:0000318"/>
    <property type="project" value="GO_Central"/>
</dbReference>
<dbReference type="GO" id="GO:0016604">
    <property type="term" value="C:nuclear body"/>
    <property type="evidence" value="ECO:0000314"/>
    <property type="project" value="HPA"/>
</dbReference>
<dbReference type="GO" id="GO:0005730">
    <property type="term" value="C:nucleolus"/>
    <property type="evidence" value="ECO:0000314"/>
    <property type="project" value="HPA"/>
</dbReference>
<dbReference type="GO" id="GO:0005654">
    <property type="term" value="C:nucleoplasm"/>
    <property type="evidence" value="ECO:0000314"/>
    <property type="project" value="HPA"/>
</dbReference>
<dbReference type="GO" id="GO:0005634">
    <property type="term" value="C:nucleus"/>
    <property type="evidence" value="ECO:0000314"/>
    <property type="project" value="UniProtKB"/>
</dbReference>
<dbReference type="GO" id="GO:0005524">
    <property type="term" value="F:ATP binding"/>
    <property type="evidence" value="ECO:0007669"/>
    <property type="project" value="UniProtKB-KW"/>
</dbReference>
<dbReference type="GO" id="GO:0016887">
    <property type="term" value="F:ATP hydrolysis activity"/>
    <property type="evidence" value="ECO:0000318"/>
    <property type="project" value="GO_Central"/>
</dbReference>
<dbReference type="GO" id="GO:0003774">
    <property type="term" value="F:cytoskeletal motor activity"/>
    <property type="evidence" value="ECO:0000314"/>
    <property type="project" value="UniProtKB"/>
</dbReference>
<dbReference type="GO" id="GO:0019894">
    <property type="term" value="F:kinesin binding"/>
    <property type="evidence" value="ECO:0000353"/>
    <property type="project" value="UniProtKB"/>
</dbReference>
<dbReference type="GO" id="GO:0008017">
    <property type="term" value="F:microtubule binding"/>
    <property type="evidence" value="ECO:0000318"/>
    <property type="project" value="GO_Central"/>
</dbReference>
<dbReference type="GO" id="GO:0008574">
    <property type="term" value="F:plus-end-directed microtubule motor activity"/>
    <property type="evidence" value="ECO:0000318"/>
    <property type="project" value="GO_Central"/>
</dbReference>
<dbReference type="GO" id="GO:0051301">
    <property type="term" value="P:cell division"/>
    <property type="evidence" value="ECO:0007669"/>
    <property type="project" value="UniProtKB-KW"/>
</dbReference>
<dbReference type="GO" id="GO:0007019">
    <property type="term" value="P:microtubule depolymerization"/>
    <property type="evidence" value="ECO:0000314"/>
    <property type="project" value="UniProtKB"/>
</dbReference>
<dbReference type="GO" id="GO:0007018">
    <property type="term" value="P:microtubule-based movement"/>
    <property type="evidence" value="ECO:0000318"/>
    <property type="project" value="GO_Central"/>
</dbReference>
<dbReference type="GO" id="GO:0000278">
    <property type="term" value="P:mitotic cell cycle"/>
    <property type="evidence" value="ECO:0000314"/>
    <property type="project" value="UniProtKB"/>
</dbReference>
<dbReference type="GO" id="GO:0000070">
    <property type="term" value="P:mitotic sister chromatid segregation"/>
    <property type="evidence" value="ECO:0000318"/>
    <property type="project" value="GO_Central"/>
</dbReference>
<dbReference type="GO" id="GO:0051302">
    <property type="term" value="P:regulation of cell division"/>
    <property type="evidence" value="ECO:0000314"/>
    <property type="project" value="UniProtKB"/>
</dbReference>
<dbReference type="CDD" id="cd01370">
    <property type="entry name" value="KISc_KIP3_like"/>
    <property type="match status" value="1"/>
</dbReference>
<dbReference type="FunFam" id="3.40.850.10:FF:000027">
    <property type="entry name" value="Kinesin-like protein"/>
    <property type="match status" value="1"/>
</dbReference>
<dbReference type="Gene3D" id="3.40.850.10">
    <property type="entry name" value="Kinesin motor domain"/>
    <property type="match status" value="1"/>
</dbReference>
<dbReference type="InterPro" id="IPR027640">
    <property type="entry name" value="Kinesin-like_fam"/>
</dbReference>
<dbReference type="InterPro" id="IPR019821">
    <property type="entry name" value="Kinesin_motor_CS"/>
</dbReference>
<dbReference type="InterPro" id="IPR001752">
    <property type="entry name" value="Kinesin_motor_dom"/>
</dbReference>
<dbReference type="InterPro" id="IPR036961">
    <property type="entry name" value="Kinesin_motor_dom_sf"/>
</dbReference>
<dbReference type="InterPro" id="IPR027417">
    <property type="entry name" value="P-loop_NTPase"/>
</dbReference>
<dbReference type="PANTHER" id="PTHR47968">
    <property type="entry name" value="CENTROMERE PROTEIN E"/>
    <property type="match status" value="1"/>
</dbReference>
<dbReference type="PANTHER" id="PTHR47968:SF71">
    <property type="entry name" value="KINESIN-LIKE PROTEIN"/>
    <property type="match status" value="1"/>
</dbReference>
<dbReference type="Pfam" id="PF00225">
    <property type="entry name" value="Kinesin"/>
    <property type="match status" value="1"/>
</dbReference>
<dbReference type="PRINTS" id="PR00380">
    <property type="entry name" value="KINESINHEAVY"/>
</dbReference>
<dbReference type="SMART" id="SM00129">
    <property type="entry name" value="KISc"/>
    <property type="match status" value="1"/>
</dbReference>
<dbReference type="SUPFAM" id="SSF52540">
    <property type="entry name" value="P-loop containing nucleoside triphosphate hydrolases"/>
    <property type="match status" value="1"/>
</dbReference>
<dbReference type="PROSITE" id="PS00411">
    <property type="entry name" value="KINESIN_MOTOR_1"/>
    <property type="match status" value="1"/>
</dbReference>
<dbReference type="PROSITE" id="PS50067">
    <property type="entry name" value="KINESIN_MOTOR_2"/>
    <property type="match status" value="1"/>
</dbReference>
<keyword id="KW-0025">Alternative splicing</keyword>
<keyword id="KW-0067">ATP-binding</keyword>
<keyword id="KW-0131">Cell cycle</keyword>
<keyword id="KW-0132">Cell division</keyword>
<keyword id="KW-0175">Coiled coil</keyword>
<keyword id="KW-0963">Cytoplasm</keyword>
<keyword id="KW-0206">Cytoskeleton</keyword>
<keyword id="KW-0493">Microtubule</keyword>
<keyword id="KW-0498">Mitosis</keyword>
<keyword id="KW-0505">Motor protein</keyword>
<keyword id="KW-0547">Nucleotide-binding</keyword>
<keyword id="KW-0539">Nucleus</keyword>
<keyword id="KW-0597">Phosphoprotein</keyword>
<keyword id="KW-1267">Proteomics identification</keyword>
<keyword id="KW-1185">Reference proteome</keyword>
<feature type="chain" id="PRO_0000318969" description="Kinesin-like protein KIF18B">
    <location>
        <begin position="1"/>
        <end position="852"/>
    </location>
</feature>
<feature type="domain" description="Kinesin motor" evidence="2">
    <location>
        <begin position="7"/>
        <end position="351"/>
    </location>
</feature>
<feature type="region of interest" description="Disordered" evidence="3">
    <location>
        <begin position="390"/>
        <end position="424"/>
    </location>
</feature>
<feature type="region of interest" description="Disordered" evidence="3">
    <location>
        <begin position="437"/>
        <end position="485"/>
    </location>
</feature>
<feature type="region of interest" description="Disordered" evidence="3">
    <location>
        <begin position="575"/>
        <end position="594"/>
    </location>
</feature>
<feature type="region of interest" description="Disordered" evidence="3">
    <location>
        <begin position="602"/>
        <end position="689"/>
    </location>
</feature>
<feature type="region of interest" description="KIF2C-binding">
    <location>
        <begin position="711"/>
        <end position="736"/>
    </location>
</feature>
<feature type="region of interest" description="Disordered" evidence="3">
    <location>
        <begin position="767"/>
        <end position="798"/>
    </location>
</feature>
<feature type="coiled-coil region" evidence="1">
    <location>
        <begin position="366"/>
        <end position="393"/>
    </location>
</feature>
<feature type="short sequence motif" description="Nuclear localization signal" evidence="6">
    <location>
        <begin position="624"/>
        <end position="632"/>
    </location>
</feature>
<feature type="short sequence motif" description="MAPRE1-binding">
    <location>
        <begin position="653"/>
        <end position="656"/>
    </location>
</feature>
<feature type="short sequence motif" description="MAPRE1-binding">
    <location>
        <begin position="774"/>
        <end position="777"/>
    </location>
</feature>
<feature type="short sequence motif" description="MAPRE1-binding">
    <location>
        <begin position="800"/>
        <end position="803"/>
    </location>
</feature>
<feature type="compositionally biased region" description="Acidic residues" evidence="3">
    <location>
        <begin position="451"/>
        <end position="461"/>
    </location>
</feature>
<feature type="compositionally biased region" description="Pro residues" evidence="3">
    <location>
        <begin position="577"/>
        <end position="588"/>
    </location>
</feature>
<feature type="compositionally biased region" description="Polar residues" evidence="3">
    <location>
        <begin position="664"/>
        <end position="673"/>
    </location>
</feature>
<feature type="binding site" evidence="2">
    <location>
        <begin position="109"/>
        <end position="116"/>
    </location>
    <ligand>
        <name>ATP</name>
        <dbReference type="ChEBI" id="CHEBI:30616"/>
    </ligand>
</feature>
<feature type="modified residue" description="Phosphoserine" evidence="8 9 10 11">
    <location>
        <position position="404"/>
    </location>
</feature>
<feature type="modified residue" description="Phosphothreonine" evidence="9">
    <location>
        <position position="417"/>
    </location>
</feature>
<feature type="modified residue" description="Phosphoserine" evidence="9">
    <location>
        <position position="452"/>
    </location>
</feature>
<feature type="modified residue" description="Phosphoserine" evidence="9">
    <location>
        <position position="480"/>
    </location>
</feature>
<feature type="modified residue" description="Phosphoserine" evidence="11">
    <location>
        <position position="558"/>
    </location>
</feature>
<feature type="modified residue" description="Phosphoserine" evidence="9 11">
    <location>
        <position position="633"/>
    </location>
</feature>
<feature type="modified residue" description="Phosphoserine" evidence="9">
    <location>
        <position position="639"/>
    </location>
</feature>
<feature type="modified residue" description="Phosphoserine" evidence="7 8 9 11">
    <location>
        <position position="662"/>
    </location>
</feature>
<feature type="modified residue" description="Phosphothreonine" evidence="11">
    <location>
        <position position="674"/>
    </location>
</feature>
<feature type="modified residue" description="Phosphoserine" evidence="9">
    <location>
        <position position="822"/>
    </location>
</feature>
<feature type="splice variant" id="VSP_060111" description="In isoform 2.">
    <original>H</original>
    <variation>HLPSSPLPPHPPS</variation>
    <location>
        <position position="413"/>
    </location>
</feature>
<feature type="splice variant" id="VSP_060112" description="In isoform 2.">
    <original>ELPL</original>
    <variation>GDWH</variation>
    <location>
        <begin position="818"/>
        <end position="821"/>
    </location>
</feature>
<feature type="splice variant" id="VSP_060113" description="In isoform 2.">
    <location>
        <begin position="822"/>
        <end position="852"/>
    </location>
</feature>
<feature type="sequence variant" id="VAR_038925" description="In dbSNP:rs17546822.">
    <original>Q</original>
    <variation>R</variation>
    <location>
        <position position="506"/>
    </location>
</feature>
<comment type="function">
    <text evidence="4 5">In complex with KIF2C, constitutes the major microtubule plus-end depolymerizing activity in mitotic cells. Its major role may be to transport KIF2C and/or MAPRE1 along microtubules.</text>
</comment>
<comment type="subunit">
    <text evidence="5">Interacts with MAPRE1; this interaction is required for efficient accumulation at microtubule plus ends. Interacts with KIF2C at microtubule tips; this interaction increases the affinity of both partners for microtubule plus ends and is required for robust microtubule depolymerization. KIF2C phosphorylation by AURKA or AURKB strongly reduces KIF18B-binding.</text>
</comment>
<comment type="subcellular location">
    <subcellularLocation>
        <location>Nucleus</location>
    </subcellularLocation>
    <subcellularLocation>
        <location>Cytoplasm</location>
    </subcellularLocation>
    <subcellularLocation>
        <location>Cytoplasm</location>
        <location>Cytoskeleton</location>
    </subcellularLocation>
    <text>Present predominantly in the nucleus and to a lesser extent in the cytoplasm of interphase cells. During mitosis, found to be closely associated with astral microtubule plus ends emanating from the spindle pole during prometaphase and metaphase.</text>
</comment>
<comment type="alternative products">
    <event type="alternative splicing"/>
    <isoform>
        <id>Q86Y91-5</id>
        <name>1</name>
        <sequence type="displayed"/>
    </isoform>
    <isoform>
        <id>Q86Y91-6</id>
        <name>2</name>
        <sequence type="described" ref="VSP_060111 VSP_060112 VSP_060113"/>
    </isoform>
</comment>
<comment type="tissue specificity">
    <text evidence="4">Shows a prominent expression in the amygdala.</text>
</comment>
<comment type="developmental stage">
    <text evidence="4 5">Regulated in a cell cycle-dependent manner. Not expressed in the G1 phase. In G2, sequestered in the nucleus. Maximal levels seen at late G2/M phase and early prometaphase. Degraded at the metaphase-anaphase transition (at protein level).</text>
</comment>
<comment type="similarity">
    <text evidence="2">Belongs to the TRAFAC class myosin-kinesin ATPase superfamily. Kinesin family.</text>
</comment>
<comment type="sequence caution" evidence="6">
    <conflict type="miscellaneous discrepancy">
        <sequence resource="EMBL-CDS" id="ADE43428"/>
    </conflict>
    <text>Probable cloning artifact.</text>
</comment>
<evidence type="ECO:0000255" key="1"/>
<evidence type="ECO:0000255" key="2">
    <source>
        <dbReference type="PROSITE-ProRule" id="PRU00283"/>
    </source>
</evidence>
<evidence type="ECO:0000256" key="3">
    <source>
        <dbReference type="SAM" id="MobiDB-lite"/>
    </source>
</evidence>
<evidence type="ECO:0000269" key="4">
    <source>
    </source>
</evidence>
<evidence type="ECO:0000269" key="5">
    <source>
    </source>
</evidence>
<evidence type="ECO:0000305" key="6"/>
<evidence type="ECO:0007744" key="7">
    <source>
    </source>
</evidence>
<evidence type="ECO:0007744" key="8">
    <source>
    </source>
</evidence>
<evidence type="ECO:0007744" key="9">
    <source>
    </source>
</evidence>
<evidence type="ECO:0007744" key="10">
    <source>
    </source>
</evidence>
<evidence type="ECO:0007744" key="11">
    <source>
    </source>
</evidence>
<sequence length="852" mass="93011">MAVEDSTLQVVVRVRPPTPRELDSQRRPVVQVVDERVLVFNPEEPDGGFPGLKWGGTHDGPKKKGKDLTFVFDRVFGEAATQQDVFQHTTHSVLDSFLQGYNCSVFAYGATGAGKTHTMLGREGDPGIMYLTTVELYRRLEARQQEKHFEVLISYQEVYNEQIHDLLEPKGPLAIREDPDKGVVVQGLSFHQPASAEQLLEILTRGNRNRTQHPTDANATSSRSHAIFQIFVKQQDRVPGLTQAVQVAKMSLIDLAGSERASSTHAKGERLREGANINRSLLALINVLNALADAKGRKTHVPYRDSKLTRLLKDSLGGNCRTVMIAAISPSSLTYEDTYNTLKYADRAKEIRLSLKSNVTSLDCHISQYATICQQLQAEVAALRKKLQVYEGGGQPPPQDLPGSPKSGPPPEHQPCTPELPAGPRALQEESLGMEAQVERAMEGNSSDQEQSPEDEDEGPAEEVPTQMPEQNPTHALPESPRLTLQPKPVVGHFSARELDGDRSKQLALKVLCVAQRQYSLLQAANLLTPDMITEFETLQQLVQEEKIEPGAEALRTSGLARGAPLAQELCSESIPVPSPLCPEPPGYTGPVTRTMARRLSGPLHTLGIPPGPNCTPAQGSRWPMEKKRRRPSALEADSPMAPKRGTKRQRQSFLPCLRRGSLPDTQPSQGPSTPKGERASSPCHSPRVCPATVIKSRVPLGPSAMQNCSTPLALPTRDLNATFDLSEEPPSKPSFHECIGWDKIPQELSRLDQPFIPRAPVPLFTMKGPKPTSSLPGTSACKKKRVASSSVSHGRSRIARLPSSTLKRPAGPLVLPELPLSPLCPSNRRNGKDLIRVGRALSAGNGVTKVS</sequence>
<gene>
    <name type="primary">KIF18B</name>
</gene>
<reference key="1">
    <citation type="journal article" date="2010" name="Gene">
        <title>Cell cycle-regulated expression and subcellular localization of a kinesin-8 member human KIF18B.</title>
        <authorList>
            <person name="Lee Y.M."/>
            <person name="Kim E."/>
            <person name="Park M."/>
            <person name="Moon E."/>
            <person name="Ahn S.M."/>
            <person name="Kim W."/>
            <person name="Hwang K.B."/>
            <person name="Kim Y.K."/>
            <person name="Choi W."/>
            <person name="Kim W."/>
        </authorList>
    </citation>
    <scope>NUCLEOTIDE SEQUENCE [MRNA] (ISOFORM 2)</scope>
    <scope>FUNCTION</scope>
    <scope>SUBCELLULAR LOCATION</scope>
    <scope>TISSUE SPECIFICITY</scope>
    <scope>DEVELOPMENTAL STAGE</scope>
</reference>
<reference key="2">
    <citation type="journal article" date="2006" name="Nature">
        <title>DNA sequence of human chromosome 17 and analysis of rearrangement in the human lineage.</title>
        <authorList>
            <person name="Zody M.C."/>
            <person name="Garber M."/>
            <person name="Adams D.J."/>
            <person name="Sharpe T."/>
            <person name="Harrow J."/>
            <person name="Lupski J.R."/>
            <person name="Nicholson C."/>
            <person name="Searle S.M."/>
            <person name="Wilming L."/>
            <person name="Young S.K."/>
            <person name="Abouelleil A."/>
            <person name="Allen N.R."/>
            <person name="Bi W."/>
            <person name="Bloom T."/>
            <person name="Borowsky M.L."/>
            <person name="Bugalter B.E."/>
            <person name="Butler J."/>
            <person name="Chang J.L."/>
            <person name="Chen C.-K."/>
            <person name="Cook A."/>
            <person name="Corum B."/>
            <person name="Cuomo C.A."/>
            <person name="de Jong P.J."/>
            <person name="DeCaprio D."/>
            <person name="Dewar K."/>
            <person name="FitzGerald M."/>
            <person name="Gilbert J."/>
            <person name="Gibson R."/>
            <person name="Gnerre S."/>
            <person name="Goldstein S."/>
            <person name="Grafham D.V."/>
            <person name="Grocock R."/>
            <person name="Hafez N."/>
            <person name="Hagopian D.S."/>
            <person name="Hart E."/>
            <person name="Norman C.H."/>
            <person name="Humphray S."/>
            <person name="Jaffe D.B."/>
            <person name="Jones M."/>
            <person name="Kamal M."/>
            <person name="Khodiyar V.K."/>
            <person name="LaButti K."/>
            <person name="Laird G."/>
            <person name="Lehoczky J."/>
            <person name="Liu X."/>
            <person name="Lokyitsang T."/>
            <person name="Loveland J."/>
            <person name="Lui A."/>
            <person name="Macdonald P."/>
            <person name="Major J.E."/>
            <person name="Matthews L."/>
            <person name="Mauceli E."/>
            <person name="McCarroll S.A."/>
            <person name="Mihalev A.H."/>
            <person name="Mudge J."/>
            <person name="Nguyen C."/>
            <person name="Nicol R."/>
            <person name="O'Leary S.B."/>
            <person name="Osoegawa K."/>
            <person name="Schwartz D.C."/>
            <person name="Shaw-Smith C."/>
            <person name="Stankiewicz P."/>
            <person name="Steward C."/>
            <person name="Swarbreck D."/>
            <person name="Venkataraman V."/>
            <person name="Whittaker C.A."/>
            <person name="Yang X."/>
            <person name="Zimmer A.R."/>
            <person name="Bradley A."/>
            <person name="Hubbard T."/>
            <person name="Birren B.W."/>
            <person name="Rogers J."/>
            <person name="Lander E.S."/>
            <person name="Nusbaum C."/>
        </authorList>
    </citation>
    <scope>NUCLEOTIDE SEQUENCE [LARGE SCALE GENOMIC DNA]</scope>
</reference>
<reference key="3">
    <citation type="journal article" date="2004" name="Genome Res.">
        <title>The status, quality, and expansion of the NIH full-length cDNA project: the Mammalian Gene Collection (MGC).</title>
        <authorList>
            <consortium name="The MGC Project Team"/>
        </authorList>
    </citation>
    <scope>NUCLEOTIDE SEQUENCE [LARGE SCALE MRNA] (ISOFORMS 1 AND 2)</scope>
    <source>
        <tissue>Testis</tissue>
    </source>
</reference>
<reference key="4">
    <citation type="journal article" date="2008" name="J. Proteome Res.">
        <title>Combining protein-based IMAC, peptide-based IMAC, and MudPIT for efficient phosphoproteomic analysis.</title>
        <authorList>
            <person name="Cantin G.T."/>
            <person name="Yi W."/>
            <person name="Lu B."/>
            <person name="Park S.K."/>
            <person name="Xu T."/>
            <person name="Lee J.-D."/>
            <person name="Yates J.R. III"/>
        </authorList>
    </citation>
    <scope>PHOSPHORYLATION [LARGE SCALE ANALYSIS] AT SER-662</scope>
    <scope>IDENTIFICATION BY MASS SPECTROMETRY [LARGE SCALE ANALYSIS]</scope>
    <source>
        <tissue>Cervix carcinoma</tissue>
    </source>
</reference>
<reference key="5">
    <citation type="journal article" date="2008" name="Mol. Cell">
        <title>Kinase-selective enrichment enables quantitative phosphoproteomics of the kinome across the cell cycle.</title>
        <authorList>
            <person name="Daub H."/>
            <person name="Olsen J.V."/>
            <person name="Bairlein M."/>
            <person name="Gnad F."/>
            <person name="Oppermann F.S."/>
            <person name="Korner R."/>
            <person name="Greff Z."/>
            <person name="Keri G."/>
            <person name="Stemmann O."/>
            <person name="Mann M."/>
        </authorList>
    </citation>
    <scope>PHOSPHORYLATION [LARGE SCALE ANALYSIS] AT SER-404; THR-417; SER-452; SER-480; SER-633; SER-639; SER-662 AND SER-822</scope>
    <scope>IDENTIFICATION BY MASS SPECTROMETRY [LARGE SCALE ANALYSIS]</scope>
    <source>
        <tissue>Cervix carcinoma</tissue>
    </source>
</reference>
<reference key="6">
    <citation type="journal article" date="2008" name="Proc. Natl. Acad. Sci. U.S.A.">
        <title>A quantitative atlas of mitotic phosphorylation.</title>
        <authorList>
            <person name="Dephoure N."/>
            <person name="Zhou C."/>
            <person name="Villen J."/>
            <person name="Beausoleil S.A."/>
            <person name="Bakalarski C.E."/>
            <person name="Elledge S.J."/>
            <person name="Gygi S.P."/>
        </authorList>
    </citation>
    <scope>PHOSPHORYLATION [LARGE SCALE ANALYSIS] AT SER-404 AND SER-662</scope>
    <scope>IDENTIFICATION BY MASS SPECTROMETRY [LARGE SCALE ANALYSIS]</scope>
    <source>
        <tissue>Cervix carcinoma</tissue>
    </source>
</reference>
<reference key="7">
    <citation type="journal article" date="2010" name="Sci. Signal.">
        <title>Quantitative phosphoproteomics reveals widespread full phosphorylation site occupancy during mitosis.</title>
        <authorList>
            <person name="Olsen J.V."/>
            <person name="Vermeulen M."/>
            <person name="Santamaria A."/>
            <person name="Kumar C."/>
            <person name="Miller M.L."/>
            <person name="Jensen L.J."/>
            <person name="Gnad F."/>
            <person name="Cox J."/>
            <person name="Jensen T.S."/>
            <person name="Nigg E.A."/>
            <person name="Brunak S."/>
            <person name="Mann M."/>
        </authorList>
    </citation>
    <scope>PHOSPHORYLATION [LARGE SCALE ANALYSIS] AT SER-404</scope>
    <scope>IDENTIFICATION BY MASS SPECTROMETRY [LARGE SCALE ANALYSIS]</scope>
    <source>
        <tissue>Cervix carcinoma</tissue>
    </source>
</reference>
<reference key="8">
    <citation type="journal article" date="2011" name="Curr. Biol.">
        <title>A complex of Kif18b and MCAK promotes microtubule depolymerization and is negatively regulated by Aurora kinases.</title>
        <authorList>
            <person name="Tanenbaum M.E."/>
            <person name="Macurek L."/>
            <person name="van der Vaart B."/>
            <person name="Galli M."/>
            <person name="Akhmanova A."/>
            <person name="Medema R.H."/>
        </authorList>
    </citation>
    <scope>FUNCTION</scope>
    <scope>INTERACTION WITH MAPRE1 AND KIF2C</scope>
    <scope>SUBCELLULAR LOCATION</scope>
    <scope>DEVELOPMENTAL STAGE</scope>
</reference>
<reference key="9">
    <citation type="journal article" date="2011" name="Sci. Signal.">
        <title>System-wide temporal characterization of the proteome and phosphoproteome of human embryonic stem cell differentiation.</title>
        <authorList>
            <person name="Rigbolt K.T."/>
            <person name="Prokhorova T.A."/>
            <person name="Akimov V."/>
            <person name="Henningsen J."/>
            <person name="Johansen P.T."/>
            <person name="Kratchmarova I."/>
            <person name="Kassem M."/>
            <person name="Mann M."/>
            <person name="Olsen J.V."/>
            <person name="Blagoev B."/>
        </authorList>
    </citation>
    <scope>IDENTIFICATION BY MASS SPECTROMETRY [LARGE SCALE ANALYSIS]</scope>
</reference>
<reference key="10">
    <citation type="journal article" date="2013" name="J. Proteome Res.">
        <title>Toward a comprehensive characterization of a human cancer cell phosphoproteome.</title>
        <authorList>
            <person name="Zhou H."/>
            <person name="Di Palma S."/>
            <person name="Preisinger C."/>
            <person name="Peng M."/>
            <person name="Polat A.N."/>
            <person name="Heck A.J."/>
            <person name="Mohammed S."/>
        </authorList>
    </citation>
    <scope>PHOSPHORYLATION [LARGE SCALE ANALYSIS] AT SER-404; SER-558; SER-633; SER-662 AND THR-674</scope>
    <scope>IDENTIFICATION BY MASS SPECTROMETRY [LARGE SCALE ANALYSIS]</scope>
    <source>
        <tissue>Cervix carcinoma</tissue>
        <tissue>Erythroleukemia</tissue>
    </source>
</reference>
<name>KI18B_HUMAN</name>